<proteinExistence type="evidence at protein level"/>
<reference key="1">
    <citation type="journal article" date="2006" name="J. Bacteriol.">
        <title>Identification and functional characterization of the Lactococcus lactis CodY-regulated branched-chain amino acid permease BcaP (CtrA).</title>
        <authorList>
            <person name="den Hengst C.D."/>
            <person name="Groeneveld M."/>
            <person name="Kuipers O.P."/>
            <person name="Kok J."/>
        </authorList>
    </citation>
    <scope>NUCLEOTIDE SEQUENCE [GENOMIC DNA]</scope>
    <scope>FUNCTION AS A TRANSPORTER</scope>
    <scope>DISRUPTION PHENOTYPE</scope>
    <source>
        <strain>MG1363</strain>
    </source>
</reference>
<reference key="2">
    <citation type="journal article" date="2007" name="J. Bacteriol.">
        <title>The complete genome sequence of the lactic acid bacterial paradigm Lactococcus lactis subsp. cremoris MG1363.</title>
        <authorList>
            <person name="Wegmann U."/>
            <person name="O'Connell-Motherway M."/>
            <person name="Zomer A."/>
            <person name="Buist G."/>
            <person name="Shearman C."/>
            <person name="Canchaya C."/>
            <person name="Ventura M."/>
            <person name="Goesmann A."/>
            <person name="Gasson M.J."/>
            <person name="Kuipers O.P."/>
            <person name="van Sinderen D."/>
            <person name="Kok J."/>
        </authorList>
    </citation>
    <scope>NUCLEOTIDE SEQUENCE [LARGE SCALE GENOMIC DNA]</scope>
    <source>
        <strain>MG1363</strain>
    </source>
</reference>
<reference key="3">
    <citation type="journal article" date="2005" name="J. Biol. Chem.">
        <title>The Lactococcus lactis CodY regulon: identification of a conserved cis-regulatory element.</title>
        <authorList>
            <person name="den Hengst C.D."/>
            <person name="van Hijum S.A."/>
            <person name="Geurts J.M."/>
            <person name="Nauta A."/>
            <person name="Kok J."/>
            <person name="Kuipers O.P."/>
        </authorList>
    </citation>
    <scope>TRANSCRIPTIONAL REGULATION BY CODY</scope>
    <source>
        <strain>MG1363</strain>
    </source>
</reference>
<dbReference type="EMBL" id="DQ377686">
    <property type="status" value="NOT_ANNOTATED_CDS"/>
    <property type="molecule type" value="Genomic_DNA"/>
</dbReference>
<dbReference type="EMBL" id="AM406671">
    <property type="protein sequence ID" value="CAL96725.1"/>
    <property type="molecule type" value="Genomic_DNA"/>
</dbReference>
<dbReference type="RefSeq" id="WP_011834216.1">
    <property type="nucleotide sequence ID" value="NC_009004.1"/>
</dbReference>
<dbReference type="SMR" id="A2RHI9"/>
<dbReference type="STRING" id="416870.llmg_0118"/>
<dbReference type="KEGG" id="llm:llmg_0118"/>
<dbReference type="eggNOG" id="COG0531">
    <property type="taxonomic scope" value="Bacteria"/>
</dbReference>
<dbReference type="HOGENOM" id="CLU_007946_15_12_9"/>
<dbReference type="OrthoDB" id="9762947at2"/>
<dbReference type="PhylomeDB" id="A2RHI9"/>
<dbReference type="Proteomes" id="UP000000364">
    <property type="component" value="Chromosome"/>
</dbReference>
<dbReference type="GO" id="GO:0005886">
    <property type="term" value="C:plasma membrane"/>
    <property type="evidence" value="ECO:0007669"/>
    <property type="project" value="UniProtKB-SubCell"/>
</dbReference>
<dbReference type="GO" id="GO:0015171">
    <property type="term" value="F:amino acid transmembrane transporter activity"/>
    <property type="evidence" value="ECO:0007669"/>
    <property type="project" value="TreeGrafter"/>
</dbReference>
<dbReference type="Gene3D" id="1.20.1740.10">
    <property type="entry name" value="Amino acid/polyamine transporter I"/>
    <property type="match status" value="1"/>
</dbReference>
<dbReference type="InterPro" id="IPR002293">
    <property type="entry name" value="AA/rel_permease1"/>
</dbReference>
<dbReference type="PANTHER" id="PTHR43243:SF4">
    <property type="entry name" value="CATIONIC AMINO ACID TRANSPORTER 4"/>
    <property type="match status" value="1"/>
</dbReference>
<dbReference type="PANTHER" id="PTHR43243">
    <property type="entry name" value="INNER MEMBRANE TRANSPORTER YGJI-RELATED"/>
    <property type="match status" value="1"/>
</dbReference>
<dbReference type="Pfam" id="PF13520">
    <property type="entry name" value="AA_permease_2"/>
    <property type="match status" value="1"/>
</dbReference>
<dbReference type="PIRSF" id="PIRSF006060">
    <property type="entry name" value="AA_transporter"/>
    <property type="match status" value="1"/>
</dbReference>
<feature type="chain" id="PRO_0000456813" description="Branched-chain amino acid permease BcaP">
    <location>
        <begin position="1"/>
        <end position="465"/>
    </location>
</feature>
<feature type="transmembrane region" description="Helical" evidence="1">
    <location>
        <begin position="28"/>
        <end position="48"/>
    </location>
</feature>
<feature type="transmembrane region" description="Helical" evidence="1">
    <location>
        <begin position="56"/>
        <end position="76"/>
    </location>
</feature>
<feature type="transmembrane region" description="Helical" evidence="1">
    <location>
        <begin position="88"/>
        <end position="110"/>
    </location>
</feature>
<feature type="transmembrane region" description="Helical" evidence="1">
    <location>
        <begin position="149"/>
        <end position="169"/>
    </location>
</feature>
<feature type="transmembrane region" description="Helical" evidence="1">
    <location>
        <begin position="181"/>
        <end position="201"/>
    </location>
</feature>
<feature type="transmembrane region" description="Helical" evidence="1">
    <location>
        <begin position="219"/>
        <end position="239"/>
    </location>
</feature>
<feature type="transmembrane region" description="Helical" evidence="1">
    <location>
        <begin position="259"/>
        <end position="279"/>
    </location>
</feature>
<feature type="transmembrane region" description="Helical" evidence="1">
    <location>
        <begin position="309"/>
        <end position="329"/>
    </location>
</feature>
<feature type="transmembrane region" description="Helical" evidence="1">
    <location>
        <begin position="359"/>
        <end position="379"/>
    </location>
</feature>
<feature type="transmembrane region" description="Helical" evidence="1">
    <location>
        <begin position="380"/>
        <end position="400"/>
    </location>
</feature>
<feature type="transmembrane region" description="Helical" evidence="1">
    <location>
        <begin position="416"/>
        <end position="436"/>
    </location>
</feature>
<feature type="transmembrane region" description="Helical" evidence="1">
    <location>
        <begin position="438"/>
        <end position="458"/>
    </location>
</feature>
<name>BCAP_LACLM</name>
<protein>
    <recommendedName>
        <fullName evidence="5">Branched-chain amino acid permease BcaP</fullName>
        <shortName evidence="6">BCAA permease</shortName>
    </recommendedName>
    <alternativeName>
        <fullName evidence="5">BCAA transporter</fullName>
    </alternativeName>
</protein>
<gene>
    <name evidence="5" type="primary">bcaP</name>
    <name evidence="4" type="synonym">ctrA</name>
    <name evidence="7" type="ordered locus">llmg_0118</name>
</gene>
<sequence>MGFMRKADFELYRDADKHYNQVLTTRDFLALGVGTIISTSIFTLPGQVAAQFAGPGVVFSYLLAALVAGFVALAYAEMSTVMPFAGSAYSWISVLFGEGFGWIAGWALLAEYFIAVAFVGSGFSANLQQLLAPLGFQLPKVLANPFGTDGGIVDIISLLVILLSAIIVFRGASDAGRISQILVVLKVAAVIAFIIVGITVIKPANYHPFIPPHNPKTGFGGFSGIWSGVSMIFLAYIGFDSIAANSAEAKNPQKTMPRGIIGSLLIAVVLFAAVTLVLVGMHPYSAYAGNAAPVGWALQQSGYSVLSEVVTAIALAGMFIALLGMVLAGSRLLYAFGRDGLLPKGLGKMNARNLPANGVWTLAIVAIVIGAFFPFAFLAQLISAGTLIAFMFVTLGIYSLRRRQGKDLPEATYKMPFYPVLPALGFIGSLFVFWGLDVQAKLYSGIWFLIGIAIYFAYGNRRKKK</sequence>
<comment type="function">
    <text evidence="3">Branched-chain amino acid transport system that specifically transports branched-chain amino acids (BCAAs) (isoleucine, leucine and valine) and, to a lesser extent, methionine (PubMed:16621821). Important for CodY-mediated regulation, and required for optimal growth in media containing free amino acids as the only amino acid source (PubMed:16621821).</text>
</comment>
<comment type="subcellular location">
    <subcellularLocation>
        <location evidence="6">Cell membrane</location>
        <topology evidence="1">Multi-pass membrane protein</topology>
    </subcellularLocation>
</comment>
<comment type="induction">
    <text evidence="2">Expression is repressed by the transcriptional regulator CodY.</text>
</comment>
<comment type="disruption phenotype">
    <text evidence="3">Deletion mutant shows a strongly reduced uptake activity of BCAAs and methionine (PubMed:16621821). Deletion of the gene results in the loss of most of the BCAA uptake activity of L.lactis, and deletion of this gene together with a second BCAA permease, encoded by brnQ, further reduced the viability of the strain (PubMed:16621821).</text>
</comment>
<comment type="similarity">
    <text evidence="6">Belongs to the amino acid-polyamine-organocation (APC) superfamily.</text>
</comment>
<keyword id="KW-0029">Amino-acid transport</keyword>
<keyword id="KW-1003">Cell membrane</keyword>
<keyword id="KW-0472">Membrane</keyword>
<keyword id="KW-0812">Transmembrane</keyword>
<keyword id="KW-1133">Transmembrane helix</keyword>
<keyword id="KW-0813">Transport</keyword>
<accession>A2RHI9</accession>
<evidence type="ECO:0000255" key="1"/>
<evidence type="ECO:0000269" key="2">
    <source>
    </source>
</evidence>
<evidence type="ECO:0000269" key="3">
    <source>
    </source>
</evidence>
<evidence type="ECO:0000303" key="4">
    <source>
    </source>
</evidence>
<evidence type="ECO:0000303" key="5">
    <source>
    </source>
</evidence>
<evidence type="ECO:0000305" key="6"/>
<evidence type="ECO:0000312" key="7">
    <source>
        <dbReference type="EMBL" id="CAL96725.1"/>
    </source>
</evidence>
<organism>
    <name type="scientific">Lactococcus lactis subsp. cremoris (strain MG1363)</name>
    <dbReference type="NCBI Taxonomy" id="416870"/>
    <lineage>
        <taxon>Bacteria</taxon>
        <taxon>Bacillati</taxon>
        <taxon>Bacillota</taxon>
        <taxon>Bacilli</taxon>
        <taxon>Lactobacillales</taxon>
        <taxon>Streptococcaceae</taxon>
        <taxon>Lactococcus</taxon>
        <taxon>Lactococcus cremoris subsp. cremoris</taxon>
    </lineage>
</organism>